<gene>
    <name type="primary">grx</name>
    <name type="ordered locus">NMB1790</name>
</gene>
<organism>
    <name type="scientific">Neisseria meningitidis serogroup B (strain ATCC BAA-335 / MC58)</name>
    <dbReference type="NCBI Taxonomy" id="122586"/>
    <lineage>
        <taxon>Bacteria</taxon>
        <taxon>Pseudomonadati</taxon>
        <taxon>Pseudomonadota</taxon>
        <taxon>Betaproteobacteria</taxon>
        <taxon>Neisseriales</taxon>
        <taxon>Neisseriaceae</taxon>
        <taxon>Neisseria</taxon>
    </lineage>
</organism>
<proteinExistence type="inferred from homology"/>
<dbReference type="EMBL" id="AE002098">
    <property type="protein sequence ID" value="AAF42129.1"/>
    <property type="molecule type" value="Genomic_DNA"/>
</dbReference>
<dbReference type="PIR" id="E81041">
    <property type="entry name" value="E81041"/>
</dbReference>
<dbReference type="RefSeq" id="NP_274789.1">
    <property type="nucleotide sequence ID" value="NC_003112.2"/>
</dbReference>
<dbReference type="SMR" id="Q9JY15"/>
<dbReference type="FunCoup" id="Q9JY15">
    <property type="interactions" value="321"/>
</dbReference>
<dbReference type="STRING" id="122586.NMB1790"/>
<dbReference type="PaxDb" id="122586-NMB1790"/>
<dbReference type="KEGG" id="nme:NMB1790"/>
<dbReference type="PATRIC" id="fig|122586.8.peg.2278"/>
<dbReference type="HOGENOM" id="CLU_026126_7_3_4"/>
<dbReference type="InParanoid" id="Q9JY15"/>
<dbReference type="OrthoDB" id="9814618at2"/>
<dbReference type="Proteomes" id="UP000000425">
    <property type="component" value="Chromosome"/>
</dbReference>
<dbReference type="GO" id="GO:0005737">
    <property type="term" value="C:cytoplasm"/>
    <property type="evidence" value="ECO:0007669"/>
    <property type="project" value="UniProtKB-SubCell"/>
</dbReference>
<dbReference type="GO" id="GO:0009055">
    <property type="term" value="F:electron transfer activity"/>
    <property type="evidence" value="ECO:0000318"/>
    <property type="project" value="GO_Central"/>
</dbReference>
<dbReference type="GO" id="GO:0045454">
    <property type="term" value="P:cell redox homeostasis"/>
    <property type="evidence" value="ECO:0000318"/>
    <property type="project" value="GO_Central"/>
</dbReference>
<dbReference type="CDD" id="cd03418">
    <property type="entry name" value="GRX_GRXb_1_3_like"/>
    <property type="match status" value="1"/>
</dbReference>
<dbReference type="Gene3D" id="3.40.30.10">
    <property type="entry name" value="Glutaredoxin"/>
    <property type="match status" value="1"/>
</dbReference>
<dbReference type="InterPro" id="IPR011767">
    <property type="entry name" value="GLR_AS"/>
</dbReference>
<dbReference type="InterPro" id="IPR002109">
    <property type="entry name" value="Glutaredoxin"/>
</dbReference>
<dbReference type="InterPro" id="IPR014025">
    <property type="entry name" value="Glutaredoxin_subgr"/>
</dbReference>
<dbReference type="InterPro" id="IPR011900">
    <property type="entry name" value="GRX_bact"/>
</dbReference>
<dbReference type="InterPro" id="IPR036249">
    <property type="entry name" value="Thioredoxin-like_sf"/>
</dbReference>
<dbReference type="NCBIfam" id="TIGR02181">
    <property type="entry name" value="GRX_bact"/>
    <property type="match status" value="1"/>
</dbReference>
<dbReference type="PANTHER" id="PTHR46679">
    <property type="match status" value="1"/>
</dbReference>
<dbReference type="PANTHER" id="PTHR46679:SF1">
    <property type="entry name" value="GLUTAREDOXIN-2, MITOCHONDRIAL"/>
    <property type="match status" value="1"/>
</dbReference>
<dbReference type="Pfam" id="PF00462">
    <property type="entry name" value="Glutaredoxin"/>
    <property type="match status" value="1"/>
</dbReference>
<dbReference type="PRINTS" id="PR00160">
    <property type="entry name" value="GLUTAREDOXIN"/>
</dbReference>
<dbReference type="SUPFAM" id="SSF52833">
    <property type="entry name" value="Thioredoxin-like"/>
    <property type="match status" value="1"/>
</dbReference>
<dbReference type="PROSITE" id="PS00195">
    <property type="entry name" value="GLUTAREDOXIN_1"/>
    <property type="match status" value="1"/>
</dbReference>
<dbReference type="PROSITE" id="PS51354">
    <property type="entry name" value="GLUTAREDOXIN_2"/>
    <property type="match status" value="1"/>
</dbReference>
<accession>Q9JY15</accession>
<feature type="chain" id="PRO_0000141593" description="Glutaredoxin">
    <location>
        <begin position="1"/>
        <end position="85"/>
    </location>
</feature>
<feature type="domain" description="Glutaredoxin" evidence="2">
    <location>
        <begin position="1"/>
        <end position="85"/>
    </location>
</feature>
<feature type="disulfide bond" description="Redox-active" evidence="1">
    <location>
        <begin position="12"/>
        <end position="15"/>
    </location>
</feature>
<reference key="1">
    <citation type="journal article" date="2000" name="Science">
        <title>Complete genome sequence of Neisseria meningitidis serogroup B strain MC58.</title>
        <authorList>
            <person name="Tettelin H."/>
            <person name="Saunders N.J."/>
            <person name="Heidelberg J.F."/>
            <person name="Jeffries A.C."/>
            <person name="Nelson K.E."/>
            <person name="Eisen J.A."/>
            <person name="Ketchum K.A."/>
            <person name="Hood D.W."/>
            <person name="Peden J.F."/>
            <person name="Dodson R.J."/>
            <person name="Nelson W.C."/>
            <person name="Gwinn M.L."/>
            <person name="DeBoy R.T."/>
            <person name="Peterson J.D."/>
            <person name="Hickey E.K."/>
            <person name="Haft D.H."/>
            <person name="Salzberg S.L."/>
            <person name="White O."/>
            <person name="Fleischmann R.D."/>
            <person name="Dougherty B.A."/>
            <person name="Mason T.M."/>
            <person name="Ciecko A."/>
            <person name="Parksey D.S."/>
            <person name="Blair E."/>
            <person name="Cittone H."/>
            <person name="Clark E.B."/>
            <person name="Cotton M.D."/>
            <person name="Utterback T.R."/>
            <person name="Khouri H.M."/>
            <person name="Qin H."/>
            <person name="Vamathevan J.J."/>
            <person name="Gill J."/>
            <person name="Scarlato V."/>
            <person name="Masignani V."/>
            <person name="Pizza M."/>
            <person name="Grandi G."/>
            <person name="Sun L."/>
            <person name="Smith H.O."/>
            <person name="Fraser C.M."/>
            <person name="Moxon E.R."/>
            <person name="Rappuoli R."/>
            <person name="Venter J.C."/>
        </authorList>
    </citation>
    <scope>NUCLEOTIDE SEQUENCE [LARGE SCALE GENOMIC DNA]</scope>
    <source>
        <strain>ATCC BAA-335 / MC58</strain>
    </source>
</reference>
<evidence type="ECO:0000250" key="1"/>
<evidence type="ECO:0000255" key="2">
    <source>
        <dbReference type="PROSITE-ProRule" id="PRU00686"/>
    </source>
</evidence>
<evidence type="ECO:0000305" key="3"/>
<protein>
    <recommendedName>
        <fullName>Glutaredoxin</fullName>
    </recommendedName>
</protein>
<sequence>MQTVTMYTGPFCPYCAMAKRLLHAAGVGHIDEIRVDASPEAFAEMQQLSGQRSVPQIFIGETHVGGFTDLYRLQQEGGLDGLLNP</sequence>
<comment type="function">
    <text evidence="1">Has a glutathione-disulfide oxidoreductase activity in the presence of NADPH and glutathione reductase. Reduces low molecular weight disulfides and proteins (By similarity).</text>
</comment>
<comment type="subunit">
    <text evidence="1">Monomer.</text>
</comment>
<comment type="subcellular location">
    <subcellularLocation>
        <location evidence="1">Cytoplasm</location>
    </subcellularLocation>
</comment>
<comment type="similarity">
    <text evidence="3">Belongs to the glutaredoxin family.</text>
</comment>
<keyword id="KW-0963">Cytoplasm</keyword>
<keyword id="KW-1015">Disulfide bond</keyword>
<keyword id="KW-0249">Electron transport</keyword>
<keyword id="KW-0676">Redox-active center</keyword>
<keyword id="KW-1185">Reference proteome</keyword>
<keyword id="KW-0813">Transport</keyword>
<name>GLRX_NEIMB</name>